<name>NUOD_SULNB</name>
<feature type="chain" id="PRO_0000371929" description="NADH-quinone oxidoreductase subunit D">
    <location>
        <begin position="1"/>
        <end position="409"/>
    </location>
</feature>
<reference key="1">
    <citation type="journal article" date="2007" name="Proc. Natl. Acad. Sci. U.S.A.">
        <title>Deep-sea vent epsilon-proteobacterial genomes provide insights into emergence of pathogens.</title>
        <authorList>
            <person name="Nakagawa S."/>
            <person name="Takaki Y."/>
            <person name="Shimamura S."/>
            <person name="Reysenbach A.-L."/>
            <person name="Takai K."/>
            <person name="Horikoshi K."/>
        </authorList>
    </citation>
    <scope>NUCLEOTIDE SEQUENCE [LARGE SCALE GENOMIC DNA]</scope>
    <source>
        <strain>NBC37-1</strain>
    </source>
</reference>
<proteinExistence type="inferred from homology"/>
<dbReference type="EC" id="7.1.1.-" evidence="1"/>
<dbReference type="EMBL" id="AP009179">
    <property type="protein sequence ID" value="BAF73169.1"/>
    <property type="molecule type" value="Genomic_DNA"/>
</dbReference>
<dbReference type="RefSeq" id="WP_012084005.1">
    <property type="nucleotide sequence ID" value="NC_009663.1"/>
</dbReference>
<dbReference type="SMR" id="A6QCG0"/>
<dbReference type="STRING" id="387093.SUN_2229"/>
<dbReference type="KEGG" id="sun:SUN_2229"/>
<dbReference type="eggNOG" id="COG0649">
    <property type="taxonomic scope" value="Bacteria"/>
</dbReference>
<dbReference type="HOGENOM" id="CLU_015134_1_2_7"/>
<dbReference type="OrthoDB" id="9801496at2"/>
<dbReference type="Proteomes" id="UP000006378">
    <property type="component" value="Chromosome"/>
</dbReference>
<dbReference type="GO" id="GO:0005886">
    <property type="term" value="C:plasma membrane"/>
    <property type="evidence" value="ECO:0007669"/>
    <property type="project" value="UniProtKB-SubCell"/>
</dbReference>
<dbReference type="GO" id="GO:0051287">
    <property type="term" value="F:NAD binding"/>
    <property type="evidence" value="ECO:0007669"/>
    <property type="project" value="InterPro"/>
</dbReference>
<dbReference type="GO" id="GO:0050136">
    <property type="term" value="F:NADH:ubiquinone reductase (non-electrogenic) activity"/>
    <property type="evidence" value="ECO:0007669"/>
    <property type="project" value="UniProtKB-UniRule"/>
</dbReference>
<dbReference type="GO" id="GO:0048038">
    <property type="term" value="F:quinone binding"/>
    <property type="evidence" value="ECO:0007669"/>
    <property type="project" value="UniProtKB-KW"/>
</dbReference>
<dbReference type="Gene3D" id="1.10.645.10">
    <property type="entry name" value="Cytochrome-c3 Hydrogenase, chain B"/>
    <property type="match status" value="1"/>
</dbReference>
<dbReference type="HAMAP" id="MF_01358">
    <property type="entry name" value="NDH1_NuoD"/>
    <property type="match status" value="1"/>
</dbReference>
<dbReference type="InterPro" id="IPR001135">
    <property type="entry name" value="NADH_Q_OxRdtase_suD"/>
</dbReference>
<dbReference type="InterPro" id="IPR022885">
    <property type="entry name" value="NDH1_su_D/H"/>
</dbReference>
<dbReference type="InterPro" id="IPR029014">
    <property type="entry name" value="NiFe-Hase_large"/>
</dbReference>
<dbReference type="NCBIfam" id="TIGR01962">
    <property type="entry name" value="NuoD"/>
    <property type="match status" value="1"/>
</dbReference>
<dbReference type="NCBIfam" id="NF004739">
    <property type="entry name" value="PRK06075.1"/>
    <property type="match status" value="1"/>
</dbReference>
<dbReference type="PANTHER" id="PTHR11993:SF10">
    <property type="entry name" value="NADH DEHYDROGENASE [UBIQUINONE] IRON-SULFUR PROTEIN 2, MITOCHONDRIAL"/>
    <property type="match status" value="1"/>
</dbReference>
<dbReference type="PANTHER" id="PTHR11993">
    <property type="entry name" value="NADH-UBIQUINONE OXIDOREDUCTASE 49 KDA SUBUNIT"/>
    <property type="match status" value="1"/>
</dbReference>
<dbReference type="Pfam" id="PF00346">
    <property type="entry name" value="Complex1_49kDa"/>
    <property type="match status" value="1"/>
</dbReference>
<dbReference type="SUPFAM" id="SSF56762">
    <property type="entry name" value="HydB/Nqo4-like"/>
    <property type="match status" value="1"/>
</dbReference>
<evidence type="ECO:0000255" key="1">
    <source>
        <dbReference type="HAMAP-Rule" id="MF_01358"/>
    </source>
</evidence>
<organism>
    <name type="scientific">Sulfurovum sp. (strain NBC37-1)</name>
    <dbReference type="NCBI Taxonomy" id="387093"/>
    <lineage>
        <taxon>Bacteria</taxon>
        <taxon>Pseudomonadati</taxon>
        <taxon>Campylobacterota</taxon>
        <taxon>Epsilonproteobacteria</taxon>
        <taxon>Campylobacterales</taxon>
        <taxon>Sulfurovaceae</taxon>
        <taxon>Sulfurovum</taxon>
    </lineage>
</organism>
<comment type="function">
    <text evidence="1">NDH-1 shuttles electrons from NADH, via FMN and iron-sulfur (Fe-S) centers, to quinones in the respiratory chain. The immediate electron acceptor for the enzyme in this species is believed to be ubiquinone. Couples the redox reaction to proton translocation (for every two electrons transferred, four hydrogen ions are translocated across the cytoplasmic membrane), and thus conserves the redox energy in a proton gradient.</text>
</comment>
<comment type="catalytic activity">
    <reaction evidence="1">
        <text>a quinone + NADH + 5 H(+)(in) = a quinol + NAD(+) + 4 H(+)(out)</text>
        <dbReference type="Rhea" id="RHEA:57888"/>
        <dbReference type="ChEBI" id="CHEBI:15378"/>
        <dbReference type="ChEBI" id="CHEBI:24646"/>
        <dbReference type="ChEBI" id="CHEBI:57540"/>
        <dbReference type="ChEBI" id="CHEBI:57945"/>
        <dbReference type="ChEBI" id="CHEBI:132124"/>
    </reaction>
</comment>
<comment type="subunit">
    <text evidence="1">NDH-1 is composed of 14 different subunits. Subunits NuoB, C, D, E, F, and G constitute the peripheral sector of the complex.</text>
</comment>
<comment type="subcellular location">
    <subcellularLocation>
        <location evidence="1">Cell inner membrane</location>
        <topology evidence="1">Peripheral membrane protein</topology>
        <orientation evidence="1">Cytoplasmic side</orientation>
    </subcellularLocation>
</comment>
<comment type="similarity">
    <text evidence="1">Belongs to the complex I 49 kDa subunit family.</text>
</comment>
<gene>
    <name evidence="1" type="primary">nuoD</name>
    <name type="ordered locus">SUN_2229</name>
</gene>
<sequence length="409" mass="46947">MQQPNKLTPFFENLNFERDDNTMVINFGPQHPSAHGQLRLVLELEGEQVVKAYPDIGYLHRGIEKMAENMTYNEFLPTTDRLDYIASTANNYAYALAVEKLLGIEAPRRAQVIRTMLLEINRLISHLFFIATHALDVGAMSVFLYAFREREFGMDLMEDYCGARLTHSAVRIGGVPLDLPNGWIEKMISWCDKVDHELEHTYNALLQENRIWKMRLEDVGVISAEDALSWGCTGPMLRGSGVNWDIRKEEPYELYGELDFDIPVSDRCDSYGRYRLYMEEMHQSTRILRQLVSKYKESEPQLMAHAPQYISAPKEEIMTQNYALMQHFVLVTQGMRPPKGEVYVPTESPKGELGFYIKSEGEPYAYRLKCRAPSFFHTGLLQEILVGTYIADVVTIIGSTNIVFGEVDR</sequence>
<protein>
    <recommendedName>
        <fullName evidence="1">NADH-quinone oxidoreductase subunit D</fullName>
        <ecNumber evidence="1">7.1.1.-</ecNumber>
    </recommendedName>
    <alternativeName>
        <fullName evidence="1">NADH dehydrogenase I subunit D</fullName>
    </alternativeName>
    <alternativeName>
        <fullName evidence="1">NDH-1 subunit D</fullName>
    </alternativeName>
</protein>
<accession>A6QCG0</accession>
<keyword id="KW-0997">Cell inner membrane</keyword>
<keyword id="KW-1003">Cell membrane</keyword>
<keyword id="KW-0472">Membrane</keyword>
<keyword id="KW-0520">NAD</keyword>
<keyword id="KW-0874">Quinone</keyword>
<keyword id="KW-1278">Translocase</keyword>
<keyword id="KW-0813">Transport</keyword>
<keyword id="KW-0830">Ubiquinone</keyword>